<accession>A6T3K4</accession>
<keyword id="KW-0488">Methylation</keyword>
<keyword id="KW-0687">Ribonucleoprotein</keyword>
<keyword id="KW-0689">Ribosomal protein</keyword>
<keyword id="KW-0694">RNA-binding</keyword>
<keyword id="KW-0699">rRNA-binding</keyword>
<proteinExistence type="inferred from homology"/>
<organism>
    <name type="scientific">Janthinobacterium sp. (strain Marseille)</name>
    <name type="common">Minibacterium massiliensis</name>
    <dbReference type="NCBI Taxonomy" id="375286"/>
    <lineage>
        <taxon>Bacteria</taxon>
        <taxon>Pseudomonadati</taxon>
        <taxon>Pseudomonadota</taxon>
        <taxon>Betaproteobacteria</taxon>
        <taxon>Burkholderiales</taxon>
        <taxon>Oxalobacteraceae</taxon>
        <taxon>Janthinobacterium</taxon>
    </lineage>
</organism>
<comment type="function">
    <text evidence="1">One of the primary rRNA binding proteins, it binds directly near the 3'-end of the 23S rRNA, where it nucleates assembly of the 50S subunit.</text>
</comment>
<comment type="subunit">
    <text evidence="1">Part of the 50S ribosomal subunit. Forms a cluster with proteins L14 and L19.</text>
</comment>
<comment type="PTM">
    <text evidence="1">Methylated by PrmB.</text>
</comment>
<comment type="similarity">
    <text evidence="1">Belongs to the universal ribosomal protein uL3 family.</text>
</comment>
<gene>
    <name evidence="1" type="primary">rplC</name>
    <name type="ordered locus">mma_3411</name>
</gene>
<dbReference type="EMBL" id="CP000269">
    <property type="protein sequence ID" value="ABR89086.1"/>
    <property type="molecule type" value="Genomic_DNA"/>
</dbReference>
<dbReference type="RefSeq" id="WP_012081249.1">
    <property type="nucleotide sequence ID" value="NC_009659.1"/>
</dbReference>
<dbReference type="SMR" id="A6T3K4"/>
<dbReference type="STRING" id="375286.mma_3411"/>
<dbReference type="KEGG" id="mms:mma_3411"/>
<dbReference type="eggNOG" id="COG0087">
    <property type="taxonomic scope" value="Bacteria"/>
</dbReference>
<dbReference type="HOGENOM" id="CLU_044142_4_1_4"/>
<dbReference type="OrthoDB" id="9806135at2"/>
<dbReference type="Proteomes" id="UP000006388">
    <property type="component" value="Chromosome"/>
</dbReference>
<dbReference type="GO" id="GO:0022625">
    <property type="term" value="C:cytosolic large ribosomal subunit"/>
    <property type="evidence" value="ECO:0007669"/>
    <property type="project" value="TreeGrafter"/>
</dbReference>
<dbReference type="GO" id="GO:0019843">
    <property type="term" value="F:rRNA binding"/>
    <property type="evidence" value="ECO:0007669"/>
    <property type="project" value="UniProtKB-UniRule"/>
</dbReference>
<dbReference type="GO" id="GO:0003735">
    <property type="term" value="F:structural constituent of ribosome"/>
    <property type="evidence" value="ECO:0007669"/>
    <property type="project" value="InterPro"/>
</dbReference>
<dbReference type="GO" id="GO:0006412">
    <property type="term" value="P:translation"/>
    <property type="evidence" value="ECO:0007669"/>
    <property type="project" value="UniProtKB-UniRule"/>
</dbReference>
<dbReference type="FunFam" id="2.40.30.10:FF:000004">
    <property type="entry name" value="50S ribosomal protein L3"/>
    <property type="match status" value="1"/>
</dbReference>
<dbReference type="FunFam" id="3.30.160.810:FF:000001">
    <property type="entry name" value="50S ribosomal protein L3"/>
    <property type="match status" value="1"/>
</dbReference>
<dbReference type="Gene3D" id="3.30.160.810">
    <property type="match status" value="1"/>
</dbReference>
<dbReference type="Gene3D" id="2.40.30.10">
    <property type="entry name" value="Translation factors"/>
    <property type="match status" value="1"/>
</dbReference>
<dbReference type="HAMAP" id="MF_01325_B">
    <property type="entry name" value="Ribosomal_uL3_B"/>
    <property type="match status" value="1"/>
</dbReference>
<dbReference type="InterPro" id="IPR000597">
    <property type="entry name" value="Ribosomal_uL3"/>
</dbReference>
<dbReference type="InterPro" id="IPR019927">
    <property type="entry name" value="Ribosomal_uL3_bac/org-type"/>
</dbReference>
<dbReference type="InterPro" id="IPR019926">
    <property type="entry name" value="Ribosomal_uL3_CS"/>
</dbReference>
<dbReference type="InterPro" id="IPR009000">
    <property type="entry name" value="Transl_B-barrel_sf"/>
</dbReference>
<dbReference type="NCBIfam" id="TIGR03625">
    <property type="entry name" value="L3_bact"/>
    <property type="match status" value="1"/>
</dbReference>
<dbReference type="PANTHER" id="PTHR11229">
    <property type="entry name" value="50S RIBOSOMAL PROTEIN L3"/>
    <property type="match status" value="1"/>
</dbReference>
<dbReference type="PANTHER" id="PTHR11229:SF16">
    <property type="entry name" value="LARGE RIBOSOMAL SUBUNIT PROTEIN UL3C"/>
    <property type="match status" value="1"/>
</dbReference>
<dbReference type="Pfam" id="PF00297">
    <property type="entry name" value="Ribosomal_L3"/>
    <property type="match status" value="1"/>
</dbReference>
<dbReference type="SUPFAM" id="SSF50447">
    <property type="entry name" value="Translation proteins"/>
    <property type="match status" value="1"/>
</dbReference>
<dbReference type="PROSITE" id="PS00474">
    <property type="entry name" value="RIBOSOMAL_L3"/>
    <property type="match status" value="1"/>
</dbReference>
<evidence type="ECO:0000255" key="1">
    <source>
        <dbReference type="HAMAP-Rule" id="MF_01325"/>
    </source>
</evidence>
<evidence type="ECO:0000305" key="2"/>
<name>RL3_JANMA</name>
<reference key="1">
    <citation type="journal article" date="2007" name="PLoS Genet.">
        <title>Genome analysis of Minibacterium massiliensis highlights the convergent evolution of water-living bacteria.</title>
        <authorList>
            <person name="Audic S."/>
            <person name="Robert C."/>
            <person name="Campagna B."/>
            <person name="Parinello H."/>
            <person name="Claverie J.-M."/>
            <person name="Raoult D."/>
            <person name="Drancourt M."/>
        </authorList>
    </citation>
    <scope>NUCLEOTIDE SEQUENCE [LARGE SCALE GENOMIC DNA]</scope>
    <source>
        <strain>Marseille</strain>
    </source>
</reference>
<feature type="chain" id="PRO_0000353606" description="Large ribosomal subunit protein uL3">
    <location>
        <begin position="1"/>
        <end position="224"/>
    </location>
</feature>
<feature type="modified residue" description="N5-methylglutamine" evidence="1">
    <location>
        <position position="159"/>
    </location>
</feature>
<protein>
    <recommendedName>
        <fullName evidence="1">Large ribosomal subunit protein uL3</fullName>
    </recommendedName>
    <alternativeName>
        <fullName evidence="2">50S ribosomal protein L3</fullName>
    </alternativeName>
</protein>
<sequence>MNQNQDKGQGLLGRKVGMMRIFTDDGDSIPVTVLDVSNNRVTQIKTSEVDGYSAVQVAFGSRRASRVNKASAGHFAKAGVEAGTVLKEFRVAATAASELKVGDVIAASLFEVGQKVDVQGVTIGKGYAGVIKRYNFGSGRATHGNSRSHNVPGSIGMAQDPGRVFPGKRMTGHLGDVTRTTQNLEIARIDADRQLLLVKGAVPGAKNGQVIVSPAVKVKAKKGA</sequence>